<reference key="1">
    <citation type="journal article" date="2016" name="Nature">
        <title>Genome evolution in the allotetraploid frog Xenopus laevis.</title>
        <authorList>
            <person name="Session A.M."/>
            <person name="Uno Y."/>
            <person name="Kwon T."/>
            <person name="Chapman J.A."/>
            <person name="Toyoda A."/>
            <person name="Takahashi S."/>
            <person name="Fukui A."/>
            <person name="Hikosaka A."/>
            <person name="Suzuki A."/>
            <person name="Kondo M."/>
            <person name="van Heeringen S.J."/>
            <person name="Quigley I."/>
            <person name="Heinz S."/>
            <person name="Ogino H."/>
            <person name="Ochi H."/>
            <person name="Hellsten U."/>
            <person name="Lyons J.B."/>
            <person name="Simakov O."/>
            <person name="Putnam N."/>
            <person name="Stites J."/>
            <person name="Kuroki Y."/>
            <person name="Tanaka T."/>
            <person name="Michiue T."/>
            <person name="Watanabe M."/>
            <person name="Bogdanovic O."/>
            <person name="Lister R."/>
            <person name="Georgiou G."/>
            <person name="Paranjpe S.S."/>
            <person name="van Kruijsbergen I."/>
            <person name="Shu S."/>
            <person name="Carlson J."/>
            <person name="Kinoshita T."/>
            <person name="Ohta Y."/>
            <person name="Mawaribuchi S."/>
            <person name="Jenkins J."/>
            <person name="Grimwood J."/>
            <person name="Schmutz J."/>
            <person name="Mitros T."/>
            <person name="Mozaffari S.V."/>
            <person name="Suzuki Y."/>
            <person name="Haramoto Y."/>
            <person name="Yamamoto T.S."/>
            <person name="Takagi C."/>
            <person name="Heald R."/>
            <person name="Miller K."/>
            <person name="Haudenschild C."/>
            <person name="Kitzman J."/>
            <person name="Nakayama T."/>
            <person name="Izutsu Y."/>
            <person name="Robert J."/>
            <person name="Fortriede J."/>
            <person name="Burns K."/>
            <person name="Lotay V."/>
            <person name="Karimi K."/>
            <person name="Yasuoka Y."/>
            <person name="Dichmann D.S."/>
            <person name="Flajnik M.F."/>
            <person name="Houston D.W."/>
            <person name="Shendure J."/>
            <person name="DuPasquier L."/>
            <person name="Vize P.D."/>
            <person name="Zorn A.M."/>
            <person name="Ito M."/>
            <person name="Marcotte E.M."/>
            <person name="Wallingford J.B."/>
            <person name="Ito Y."/>
            <person name="Asashima M."/>
            <person name="Ueno N."/>
            <person name="Matsuda Y."/>
            <person name="Veenstra G.J."/>
            <person name="Fujiyama A."/>
            <person name="Harland R.M."/>
            <person name="Taira M."/>
            <person name="Rokhsar D.S."/>
        </authorList>
    </citation>
    <scope>NUCLEOTIDE SEQUENCE [LARGE SCALE GENOMIC DNA]</scope>
    <source>
        <strain>J</strain>
    </source>
</reference>
<reference key="2">
    <citation type="journal article" date="2018" name="Science">
        <title>Maternal Huluwa dictates the embryonic body axis through beta-catenin in vertebrates.</title>
        <authorList>
            <person name="Yan L."/>
            <person name="Chen J."/>
            <person name="Zhu X."/>
            <person name="Sun J."/>
            <person name="Wu X."/>
            <person name="Shen W."/>
            <person name="Zhang W."/>
            <person name="Tao Q."/>
            <person name="Meng A."/>
        </authorList>
    </citation>
    <scope>FUNCTION</scope>
    <scope>DEVELOPMENTAL STAGE</scope>
    <scope>DISRUPTION PHENOTYPE</scope>
</reference>
<sequence>MVTLSPAYLPSDGGTQAASAAPSVEENWVVQPSLTLLVLLLVPCVLLLFFLNCFLLFHRLPAFSLRKRASRRKVGQYPCVRVGHSGQARLEPPYMLSPGVVLREGRLGSDTISQGFEATLALEEGVCGRQNTPQSRGSCCQGGSIPSDQICCSPRPRCATPLPCCAPRRAWNAPAYVKKRLRPKVWKVREDELGSSCELDTRHNHVPPNTPAADNALGVTPKVKFCHTSSTQRKSHVGMVPFTLGGSELLEDPSVIPREDTAEHLDASSSLPGPGLDSDFGVSAGISLHILSSDSDSGSQSWTSGMEWDYYDPCYMRRNRLRRDARHNRHLPMMCSKQYWI</sequence>
<dbReference type="EMBL" id="CM004466">
    <property type="protein sequence ID" value="OCU02777.1"/>
    <property type="molecule type" value="Genomic_DNA"/>
</dbReference>
<dbReference type="STRING" id="8355.A0A1L8I316"/>
<dbReference type="PaxDb" id="8355-A0A1L8I316"/>
<dbReference type="GeneID" id="108718903"/>
<dbReference type="KEGG" id="xla:108718903"/>
<dbReference type="AGR" id="Xenbase:XB-GENE-22062235"/>
<dbReference type="CTD" id="108718903"/>
<dbReference type="Xenbase" id="XB-GENE-22062235">
    <property type="gene designation" value="hwa.L"/>
</dbReference>
<dbReference type="OMA" id="NVPKHKH"/>
<dbReference type="OrthoDB" id="10031583at2759"/>
<dbReference type="Proteomes" id="UP000186698">
    <property type="component" value="Chromosome 1L"/>
</dbReference>
<dbReference type="Proteomes" id="UP000694892">
    <property type="component" value="Chromosome 1L"/>
</dbReference>
<dbReference type="Bgee" id="108718903">
    <property type="expression patterns" value="Expressed in egg cell and 7 other cell types or tissues"/>
</dbReference>
<dbReference type="GO" id="GO:0005886">
    <property type="term" value="C:plasma membrane"/>
    <property type="evidence" value="ECO:0007669"/>
    <property type="project" value="UniProtKB-SubCell"/>
</dbReference>
<dbReference type="GO" id="GO:0009953">
    <property type="term" value="P:dorsal/ventral pattern formation"/>
    <property type="evidence" value="ECO:0000315"/>
    <property type="project" value="UniProtKB"/>
</dbReference>
<dbReference type="GO" id="GO:0000578">
    <property type="term" value="P:embryonic axis specification"/>
    <property type="evidence" value="ECO:0000315"/>
    <property type="project" value="UniProtKB"/>
</dbReference>
<dbReference type="GO" id="GO:0090263">
    <property type="term" value="P:positive regulation of canonical Wnt signaling pathway"/>
    <property type="evidence" value="ECO:0000250"/>
    <property type="project" value="UniProtKB"/>
</dbReference>
<feature type="chain" id="PRO_0000446380" description="Protein huluwa">
    <location>
        <begin position="1"/>
        <end position="341"/>
    </location>
</feature>
<feature type="topological domain" description="Extracellular" evidence="6">
    <location>
        <begin position="1"/>
        <end position="36"/>
    </location>
</feature>
<feature type="transmembrane region" description="Helical" evidence="2">
    <location>
        <begin position="37"/>
        <end position="57"/>
    </location>
</feature>
<feature type="topological domain" description="Cytoplasmic" evidence="6">
    <location>
        <begin position="58"/>
        <end position="341"/>
    </location>
</feature>
<feature type="short sequence motif" description="VPPNSP motif" evidence="1">
    <location>
        <begin position="206"/>
        <end position="211"/>
    </location>
</feature>
<comment type="function">
    <text evidence="1 3">Key maternal determinant of the dorsal organizer and body axis formation in vertebrates that acts by promoting stabilization of beta-catenin (ctnnb1) (PubMed:30467143). Localizes on the plasma membrane of the future dorsal blastomeres in early blastulas and binds to and promotes the tankyrase-mediated degradation of axin (axin1 and axin2). Axin degradation results in stabilization and nuclear translocation of beta-catenin (ctnnb1) for activating organizer-specific target gene expression (By similarity).</text>
</comment>
<comment type="subunit">
    <text evidence="1">Interacts with axin1; leading to promote the tankyrase-mediated degradation of axin. Interacts with axin2; leading to promote the tankyrase-mediated degradation of axin.</text>
</comment>
<comment type="subcellular location">
    <subcellularLocation>
        <location evidence="1">Cell membrane</location>
        <topology evidence="2">Single-pass membrane protein</topology>
    </subcellularLocation>
    <text evidence="1">Enriched on the plasma membrane of blastomeres only in a small region in which the dorsal organizer will form.</text>
</comment>
<comment type="developmental stage">
    <text evidence="3">Transcripts are present in granules at the vegetal cortex of oocytes andmove dorsally along with cortical rotation after fertilization.</text>
</comment>
<comment type="disruption phenotype">
    <text evidence="3">Morpholino knockdown of the protein results in embryos lacking the body axis and dorsal tissues (PubMed:30467143). Reduced dorsal marker expression but enhanced ventral marker expression (PubMed:30467143).</text>
</comment>
<comment type="similarity">
    <text evidence="6">Belongs to the huluwa family.</text>
</comment>
<accession>A0A1L8I316</accession>
<proteinExistence type="evidence at transcript level"/>
<keyword id="KW-1003">Cell membrane</keyword>
<keyword id="KW-0217">Developmental protein</keyword>
<keyword id="KW-0472">Membrane</keyword>
<keyword id="KW-1185">Reference proteome</keyword>
<keyword id="KW-0812">Transmembrane</keyword>
<keyword id="KW-1133">Transmembrane helix</keyword>
<evidence type="ECO:0000250" key="1">
    <source>
        <dbReference type="UniProtKB" id="E9QDC5"/>
    </source>
</evidence>
<evidence type="ECO:0000255" key="2"/>
<evidence type="ECO:0000269" key="3">
    <source>
    </source>
</evidence>
<evidence type="ECO:0000303" key="4">
    <source>
    </source>
</evidence>
<evidence type="ECO:0000303" key="5">
    <source>
    </source>
</evidence>
<evidence type="ECO:0000305" key="6"/>
<organism>
    <name type="scientific">Xenopus laevis</name>
    <name type="common">African clawed frog</name>
    <dbReference type="NCBI Taxonomy" id="8355"/>
    <lineage>
        <taxon>Eukaryota</taxon>
        <taxon>Metazoa</taxon>
        <taxon>Chordata</taxon>
        <taxon>Craniata</taxon>
        <taxon>Vertebrata</taxon>
        <taxon>Euteleostomi</taxon>
        <taxon>Amphibia</taxon>
        <taxon>Batrachia</taxon>
        <taxon>Anura</taxon>
        <taxon>Pipoidea</taxon>
        <taxon>Pipidae</taxon>
        <taxon>Xenopodinae</taxon>
        <taxon>Xenopus</taxon>
        <taxon>Xenopus</taxon>
    </lineage>
</organism>
<name>HWA_XENLA</name>
<protein>
    <recommendedName>
        <fullName evidence="5">Protein huluwa</fullName>
    </recommendedName>
</protein>
<gene>
    <name evidence="5" type="primary">hwa</name>
    <name evidence="4" type="ORF">XELAEV_18008547mg</name>
</gene>